<reference key="1">
    <citation type="submission" date="2009-07" db="EMBL/GenBank/DDBJ databases">
        <title>Complete sequence of Pectobacterium carotovorum subsp. carotovorum PC1.</title>
        <authorList>
            <consortium name="US DOE Joint Genome Institute"/>
            <person name="Lucas S."/>
            <person name="Copeland A."/>
            <person name="Lapidus A."/>
            <person name="Glavina del Rio T."/>
            <person name="Tice H."/>
            <person name="Bruce D."/>
            <person name="Goodwin L."/>
            <person name="Pitluck S."/>
            <person name="Munk A.C."/>
            <person name="Brettin T."/>
            <person name="Detter J.C."/>
            <person name="Han C."/>
            <person name="Tapia R."/>
            <person name="Larimer F."/>
            <person name="Land M."/>
            <person name="Hauser L."/>
            <person name="Kyrpides N."/>
            <person name="Mikhailova N."/>
            <person name="Balakrishnan V."/>
            <person name="Glasner J."/>
            <person name="Perna N.T."/>
        </authorList>
    </citation>
    <scope>NUCLEOTIDE SEQUENCE [LARGE SCALE GENOMIC DNA]</scope>
    <source>
        <strain>PC1</strain>
    </source>
</reference>
<comment type="function">
    <text evidence="1">Prevents the cell division inhibition by proteins MinC and MinD at internal division sites while permitting inhibition at polar sites. This ensures cell division at the proper site by restricting the formation of a division septum at the midpoint of the long axis of the cell.</text>
</comment>
<comment type="similarity">
    <text evidence="1">Belongs to the MinE family.</text>
</comment>
<gene>
    <name evidence="1" type="primary">minE</name>
    <name type="ordered locus">PC1_1938</name>
</gene>
<accession>C6DG36</accession>
<name>MINE_PECCP</name>
<evidence type="ECO:0000255" key="1">
    <source>
        <dbReference type="HAMAP-Rule" id="MF_00262"/>
    </source>
</evidence>
<sequence length="89" mass="10279">MALLDFFLSRKKTTANIAKERLQIIVAERRRGDSEPHYLPQLKRDILEVICKYVQIDPEMVTVQLEQKGDDISVLELNVTLPEAEETPK</sequence>
<dbReference type="EMBL" id="CP001657">
    <property type="protein sequence ID" value="ACT12979.1"/>
    <property type="molecule type" value="Genomic_DNA"/>
</dbReference>
<dbReference type="RefSeq" id="WP_015840174.1">
    <property type="nucleotide sequence ID" value="NC_012917.1"/>
</dbReference>
<dbReference type="SMR" id="C6DG36"/>
<dbReference type="STRING" id="561230.PC1_1938"/>
<dbReference type="GeneID" id="67793937"/>
<dbReference type="KEGG" id="pct:PC1_1938"/>
<dbReference type="eggNOG" id="COG0851">
    <property type="taxonomic scope" value="Bacteria"/>
</dbReference>
<dbReference type="HOGENOM" id="CLU_137929_2_2_6"/>
<dbReference type="OrthoDB" id="9802655at2"/>
<dbReference type="Proteomes" id="UP000002736">
    <property type="component" value="Chromosome"/>
</dbReference>
<dbReference type="GO" id="GO:0051301">
    <property type="term" value="P:cell division"/>
    <property type="evidence" value="ECO:0007669"/>
    <property type="project" value="UniProtKB-KW"/>
</dbReference>
<dbReference type="GO" id="GO:0032955">
    <property type="term" value="P:regulation of division septum assembly"/>
    <property type="evidence" value="ECO:0007669"/>
    <property type="project" value="InterPro"/>
</dbReference>
<dbReference type="FunFam" id="3.30.1070.10:FF:000001">
    <property type="entry name" value="Cell division topological specificity factor"/>
    <property type="match status" value="1"/>
</dbReference>
<dbReference type="Gene3D" id="3.30.1070.10">
    <property type="entry name" value="Cell division topological specificity factor MinE"/>
    <property type="match status" value="1"/>
</dbReference>
<dbReference type="HAMAP" id="MF_00262">
    <property type="entry name" value="MinE"/>
    <property type="match status" value="1"/>
</dbReference>
<dbReference type="InterPro" id="IPR005527">
    <property type="entry name" value="MinE"/>
</dbReference>
<dbReference type="InterPro" id="IPR036707">
    <property type="entry name" value="MinE_sf"/>
</dbReference>
<dbReference type="NCBIfam" id="TIGR01215">
    <property type="entry name" value="minE"/>
    <property type="match status" value="1"/>
</dbReference>
<dbReference type="NCBIfam" id="NF001422">
    <property type="entry name" value="PRK00296.1"/>
    <property type="match status" value="1"/>
</dbReference>
<dbReference type="Pfam" id="PF03776">
    <property type="entry name" value="MinE"/>
    <property type="match status" value="1"/>
</dbReference>
<dbReference type="SUPFAM" id="SSF55229">
    <property type="entry name" value="Cell division protein MinE topological specificity domain"/>
    <property type="match status" value="1"/>
</dbReference>
<feature type="chain" id="PRO_1000204684" description="Cell division topological specificity factor">
    <location>
        <begin position="1"/>
        <end position="89"/>
    </location>
</feature>
<keyword id="KW-0131">Cell cycle</keyword>
<keyword id="KW-0132">Cell division</keyword>
<proteinExistence type="inferred from homology"/>
<organism>
    <name type="scientific">Pectobacterium carotovorum subsp. carotovorum (strain PC1)</name>
    <dbReference type="NCBI Taxonomy" id="561230"/>
    <lineage>
        <taxon>Bacteria</taxon>
        <taxon>Pseudomonadati</taxon>
        <taxon>Pseudomonadota</taxon>
        <taxon>Gammaproteobacteria</taxon>
        <taxon>Enterobacterales</taxon>
        <taxon>Pectobacteriaceae</taxon>
        <taxon>Pectobacterium</taxon>
    </lineage>
</organism>
<protein>
    <recommendedName>
        <fullName evidence="1">Cell division topological specificity factor</fullName>
    </recommendedName>
</protein>